<proteinExistence type="inferred from homology"/>
<reference key="1">
    <citation type="journal article" date="2006" name="Science">
        <title>Genomic islands and the ecology and evolution of Prochlorococcus.</title>
        <authorList>
            <person name="Coleman M.L."/>
            <person name="Sullivan M.B."/>
            <person name="Martiny A.C."/>
            <person name="Steglich C."/>
            <person name="Barry K."/>
            <person name="Delong E.F."/>
            <person name="Chisholm S.W."/>
        </authorList>
    </citation>
    <scope>NUCLEOTIDE SEQUENCE [LARGE SCALE GENOMIC DNA]</scope>
    <source>
        <strain>MIT 9312</strain>
    </source>
</reference>
<comment type="similarity">
    <text evidence="1">Belongs to the bacterial ribosomal protein bS21 family.</text>
</comment>
<comment type="sequence caution" evidence="2">
    <conflict type="erroneous initiation">
        <sequence resource="EMBL-CDS" id="ABB50053"/>
    </conflict>
</comment>
<evidence type="ECO:0000255" key="1">
    <source>
        <dbReference type="HAMAP-Rule" id="MF_00358"/>
    </source>
</evidence>
<evidence type="ECO:0000305" key="2"/>
<name>RS21_PROM9</name>
<organism>
    <name type="scientific">Prochlorococcus marinus (strain MIT 9312)</name>
    <dbReference type="NCBI Taxonomy" id="74546"/>
    <lineage>
        <taxon>Bacteria</taxon>
        <taxon>Bacillati</taxon>
        <taxon>Cyanobacteriota</taxon>
        <taxon>Cyanophyceae</taxon>
        <taxon>Synechococcales</taxon>
        <taxon>Prochlorococcaceae</taxon>
        <taxon>Prochlorococcus</taxon>
    </lineage>
</organism>
<keyword id="KW-0687">Ribonucleoprotein</keyword>
<keyword id="KW-0689">Ribosomal protein</keyword>
<sequence>MTQVTVGENEGIESALRRFKRQVSKSGIFADLKRLRHHETPIEKYKRKLQQRRKARRR</sequence>
<feature type="chain" id="PRO_0000266728" description="Small ribosomal subunit protein bS21">
    <location>
        <begin position="1"/>
        <end position="58"/>
    </location>
</feature>
<protein>
    <recommendedName>
        <fullName evidence="1">Small ribosomal subunit protein bS21</fullName>
    </recommendedName>
    <alternativeName>
        <fullName evidence="2">30S ribosomal protein S21</fullName>
    </alternativeName>
</protein>
<accession>Q31AP2</accession>
<dbReference type="EMBL" id="CP000111">
    <property type="protein sequence ID" value="ABB50053.1"/>
    <property type="status" value="ALT_INIT"/>
    <property type="molecule type" value="Genomic_DNA"/>
</dbReference>
<dbReference type="RefSeq" id="WP_002806486.1">
    <property type="nucleotide sequence ID" value="NC_007577.1"/>
</dbReference>
<dbReference type="SMR" id="Q31AP2"/>
<dbReference type="STRING" id="74546.PMT9312_0993"/>
<dbReference type="GeneID" id="60201694"/>
<dbReference type="KEGG" id="pmi:PMT9312_0993"/>
<dbReference type="eggNOG" id="COG0828">
    <property type="taxonomic scope" value="Bacteria"/>
</dbReference>
<dbReference type="HOGENOM" id="CLU_159258_3_1_3"/>
<dbReference type="OrthoDB" id="9799244at2"/>
<dbReference type="Proteomes" id="UP000002715">
    <property type="component" value="Chromosome"/>
</dbReference>
<dbReference type="GO" id="GO:1990904">
    <property type="term" value="C:ribonucleoprotein complex"/>
    <property type="evidence" value="ECO:0007669"/>
    <property type="project" value="UniProtKB-KW"/>
</dbReference>
<dbReference type="GO" id="GO:0005840">
    <property type="term" value="C:ribosome"/>
    <property type="evidence" value="ECO:0007669"/>
    <property type="project" value="UniProtKB-KW"/>
</dbReference>
<dbReference type="GO" id="GO:0003735">
    <property type="term" value="F:structural constituent of ribosome"/>
    <property type="evidence" value="ECO:0007669"/>
    <property type="project" value="InterPro"/>
</dbReference>
<dbReference type="GO" id="GO:0006412">
    <property type="term" value="P:translation"/>
    <property type="evidence" value="ECO:0007669"/>
    <property type="project" value="UniProtKB-UniRule"/>
</dbReference>
<dbReference type="Gene3D" id="1.20.5.1150">
    <property type="entry name" value="Ribosomal protein S8"/>
    <property type="match status" value="1"/>
</dbReference>
<dbReference type="HAMAP" id="MF_00358">
    <property type="entry name" value="Ribosomal_bS21"/>
    <property type="match status" value="1"/>
</dbReference>
<dbReference type="InterPro" id="IPR001911">
    <property type="entry name" value="Ribosomal_bS21"/>
</dbReference>
<dbReference type="InterPro" id="IPR018278">
    <property type="entry name" value="Ribosomal_bS21_CS"/>
</dbReference>
<dbReference type="InterPro" id="IPR038380">
    <property type="entry name" value="Ribosomal_bS21_sf"/>
</dbReference>
<dbReference type="NCBIfam" id="TIGR00030">
    <property type="entry name" value="S21p"/>
    <property type="match status" value="1"/>
</dbReference>
<dbReference type="PANTHER" id="PTHR21109">
    <property type="entry name" value="MITOCHONDRIAL 28S RIBOSOMAL PROTEIN S21"/>
    <property type="match status" value="1"/>
</dbReference>
<dbReference type="PANTHER" id="PTHR21109:SF0">
    <property type="entry name" value="SMALL RIBOSOMAL SUBUNIT PROTEIN BS21M"/>
    <property type="match status" value="1"/>
</dbReference>
<dbReference type="Pfam" id="PF01165">
    <property type="entry name" value="Ribosomal_S21"/>
    <property type="match status" value="1"/>
</dbReference>
<dbReference type="PRINTS" id="PR00976">
    <property type="entry name" value="RIBOSOMALS21"/>
</dbReference>
<dbReference type="PROSITE" id="PS01181">
    <property type="entry name" value="RIBOSOMAL_S21"/>
    <property type="match status" value="1"/>
</dbReference>
<gene>
    <name evidence="1" type="primary">rpsU</name>
    <name evidence="1" type="synonym">rps21</name>
    <name type="ordered locus">PMT9312_0993</name>
</gene>